<accession>P48998</accession>
<feature type="chain" id="PRO_0000159743" description="Involucrin">
    <location>
        <begin position="1"/>
        <end position="568"/>
    </location>
</feature>
<feature type="region of interest" description="Disordered" evidence="2">
    <location>
        <begin position="23"/>
        <end position="499"/>
    </location>
</feature>
<feature type="region of interest" description="Disordered" evidence="2">
    <location>
        <begin position="517"/>
        <end position="568"/>
    </location>
</feature>
<feature type="compositionally biased region" description="Low complexity" evidence="2">
    <location>
        <begin position="25"/>
        <end position="36"/>
    </location>
</feature>
<feature type="compositionally biased region" description="Basic and acidic residues" evidence="2">
    <location>
        <begin position="49"/>
        <end position="77"/>
    </location>
</feature>
<feature type="compositionally biased region" description="Low complexity" evidence="2">
    <location>
        <begin position="78"/>
        <end position="88"/>
    </location>
</feature>
<feature type="compositionally biased region" description="Basic and acidic residues" evidence="2">
    <location>
        <begin position="89"/>
        <end position="106"/>
    </location>
</feature>
<feature type="compositionally biased region" description="Low complexity" evidence="2">
    <location>
        <begin position="107"/>
        <end position="121"/>
    </location>
</feature>
<feature type="compositionally biased region" description="Low complexity" evidence="2">
    <location>
        <begin position="133"/>
        <end position="154"/>
    </location>
</feature>
<feature type="compositionally biased region" description="Low complexity" evidence="2">
    <location>
        <begin position="172"/>
        <end position="181"/>
    </location>
</feature>
<feature type="compositionally biased region" description="Basic and acidic residues" evidence="2">
    <location>
        <begin position="193"/>
        <end position="213"/>
    </location>
</feature>
<feature type="compositionally biased region" description="Low complexity" evidence="2">
    <location>
        <begin position="217"/>
        <end position="232"/>
    </location>
</feature>
<feature type="compositionally biased region" description="Basic and acidic residues" evidence="2">
    <location>
        <begin position="266"/>
        <end position="333"/>
    </location>
</feature>
<feature type="compositionally biased region" description="Basic and acidic residues" evidence="2">
    <location>
        <begin position="345"/>
        <end position="456"/>
    </location>
</feature>
<feature type="compositionally biased region" description="Low complexity" evidence="2">
    <location>
        <begin position="457"/>
        <end position="467"/>
    </location>
</feature>
<feature type="compositionally biased region" description="Basic and acidic residues" evidence="2">
    <location>
        <begin position="478"/>
        <end position="499"/>
    </location>
</feature>
<feature type="compositionally biased region" description="Basic and acidic residues" evidence="2">
    <location>
        <begin position="517"/>
        <end position="532"/>
    </location>
</feature>
<feature type="compositionally biased region" description="Basic and acidic residues" evidence="2">
    <location>
        <begin position="551"/>
        <end position="568"/>
    </location>
</feature>
<feature type="modified residue" description="Phosphoserine" evidence="4">
    <location>
        <position position="472"/>
    </location>
</feature>
<keyword id="KW-0963">Cytoplasm</keyword>
<keyword id="KW-0417">Keratinization</keyword>
<keyword id="KW-0597">Phosphoprotein</keyword>
<keyword id="KW-1185">Reference proteome</keyword>
<keyword id="KW-0677">Repeat</keyword>
<reference key="1">
    <citation type="journal article" date="1993" name="Mol. Biol. Evol.">
        <title>The involucrin genes of the mouse and the rat: study of their shared repeats.</title>
        <authorList>
            <person name="Djian P."/>
            <person name="Phillips M."/>
            <person name="Easley K."/>
            <person name="Huang E."/>
            <person name="Simon M."/>
            <person name="Rice R.H."/>
            <person name="Green H."/>
        </authorList>
    </citation>
    <scope>NUCLEOTIDE SEQUENCE [GENOMIC DNA]</scope>
    <source>
        <strain>Sprague-Dawley</strain>
    </source>
</reference>
<reference key="2">
    <citation type="journal article" date="2012" name="Nat. Commun.">
        <title>Quantitative maps of protein phosphorylation sites across 14 different rat organs and tissues.</title>
        <authorList>
            <person name="Lundby A."/>
            <person name="Secher A."/>
            <person name="Lage K."/>
            <person name="Nordsborg N.B."/>
            <person name="Dmytriyev A."/>
            <person name="Lundby C."/>
            <person name="Olsen J.V."/>
        </authorList>
    </citation>
    <scope>PHOSPHORYLATION [LARGE SCALE ANALYSIS] AT SER-472</scope>
    <scope>IDENTIFICATION BY MASS SPECTROMETRY [LARGE SCALE ANALYSIS]</scope>
</reference>
<evidence type="ECO:0000250" key="1"/>
<evidence type="ECO:0000256" key="2">
    <source>
        <dbReference type="SAM" id="MobiDB-lite"/>
    </source>
</evidence>
<evidence type="ECO:0000305" key="3"/>
<evidence type="ECO:0007744" key="4">
    <source>
    </source>
</evidence>
<comment type="function">
    <text>Part of the insoluble cornified cell envelope (CE) of stratified squamous epithelia.</text>
</comment>
<comment type="subunit">
    <text evidence="1">Directly or indirectly cross-linked to cornifelin (CNFN).</text>
</comment>
<comment type="subcellular location">
    <subcellularLocation>
        <location>Cytoplasm</location>
    </subcellularLocation>
    <text>Constituent of the scaffolding of the cornified envelope.</text>
</comment>
<comment type="tissue specificity">
    <text>Keratinocytes of epidermis and other stratified squamous epithelia.</text>
</comment>
<comment type="PTM">
    <text>Substrate of transglutaminase. Specific glutamines or lysines are cross-linked to keratins, desmoplakin and to inter involucrin molecules.</text>
</comment>
<comment type="similarity">
    <text evidence="3">Belongs to the involucrin family.</text>
</comment>
<gene>
    <name type="primary">Ivl</name>
</gene>
<proteinExistence type="evidence at protein level"/>
<sequence>MSHQHTVPVTVPAVVQESLKTVCSPAQTQQEQTKQPTPYPAQCQVFTDTQEKGFPKHEEKEANPVKDLPEQESEHHQQPGPQKQQLQVKKPEQELQEQELHSEKQPQEPQGLLCLGQQQQREPQEQEQHLRQHQQPQQESQGQGLCLGQQQDVLAPQELHMGQHQKEKLQEPELPLGQQQKTPEEQELILGEKQQKLHLVERHQEPQEQELHHGQKQKQQQPQEQELQLVQHQKQKQHEPELCLRKQQQQESHERELHLGKQQQQESHEPELHLGKQQHQESHEPELHLGKQQHQESCEPELHLGEQQHQEQQQHQESCEPELHLGKQQHQETQESELQLGKQQKPHEPDMVLDPKEKQKLHDPELHLGKQQHQESQESELQVEKKQHEKSPEPELHLGKQQELHEPDMTEDQKEKQSLHEPELHLGKQQESHEPDMTEDQKEKQSLYEPELHLGKQQEQQIEYEGYQRSKSLNQLLKQEKASRGQELDDSHLEQEKELLDQRLDQELVNKDEQLERKKHKLENLTQKEKQIKQLVPSTDRVQETQPIQPVKEDSLTTKKQQHSHEVQ</sequence>
<protein>
    <recommendedName>
        <fullName>Involucrin</fullName>
    </recommendedName>
</protein>
<name>INVO_RAT</name>
<organism>
    <name type="scientific">Rattus norvegicus</name>
    <name type="common">Rat</name>
    <dbReference type="NCBI Taxonomy" id="10116"/>
    <lineage>
        <taxon>Eukaryota</taxon>
        <taxon>Metazoa</taxon>
        <taxon>Chordata</taxon>
        <taxon>Craniata</taxon>
        <taxon>Vertebrata</taxon>
        <taxon>Euteleostomi</taxon>
        <taxon>Mammalia</taxon>
        <taxon>Eutheria</taxon>
        <taxon>Euarchontoglires</taxon>
        <taxon>Glires</taxon>
        <taxon>Rodentia</taxon>
        <taxon>Myomorpha</taxon>
        <taxon>Muroidea</taxon>
        <taxon>Muridae</taxon>
        <taxon>Murinae</taxon>
        <taxon>Rattus</taxon>
    </lineage>
</organism>
<dbReference type="EMBL" id="L28818">
    <property type="protein sequence ID" value="AAA41445.1"/>
    <property type="molecule type" value="Genomic_DNA"/>
</dbReference>
<dbReference type="PIR" id="I61106">
    <property type="entry name" value="I61106"/>
</dbReference>
<dbReference type="RefSeq" id="NP_071531.1">
    <property type="nucleotide sequence ID" value="NM_022195.1"/>
</dbReference>
<dbReference type="STRING" id="10116.ENSRNOP00000012343"/>
<dbReference type="iPTMnet" id="P48998"/>
<dbReference type="PhosphoSitePlus" id="P48998"/>
<dbReference type="PaxDb" id="10116-ENSRNOP00000012343"/>
<dbReference type="GeneID" id="60583"/>
<dbReference type="KEGG" id="rno:60583"/>
<dbReference type="UCSC" id="RGD:620141">
    <property type="organism name" value="rat"/>
</dbReference>
<dbReference type="AGR" id="RGD:620141"/>
<dbReference type="CTD" id="3713"/>
<dbReference type="RGD" id="620141">
    <property type="gene designation" value="Ivl"/>
</dbReference>
<dbReference type="eggNOG" id="ENOG502REJ9">
    <property type="taxonomic scope" value="Eukaryota"/>
</dbReference>
<dbReference type="InParanoid" id="P48998"/>
<dbReference type="OrthoDB" id="9635080at2759"/>
<dbReference type="PhylomeDB" id="P48998"/>
<dbReference type="PRO" id="PR:P48998"/>
<dbReference type="Proteomes" id="UP000002494">
    <property type="component" value="Unplaced"/>
</dbReference>
<dbReference type="GO" id="GO:0001533">
    <property type="term" value="C:cornified envelope"/>
    <property type="evidence" value="ECO:0000266"/>
    <property type="project" value="RGD"/>
</dbReference>
<dbReference type="GO" id="GO:0005737">
    <property type="term" value="C:cytoplasm"/>
    <property type="evidence" value="ECO:0000266"/>
    <property type="project" value="RGD"/>
</dbReference>
<dbReference type="GO" id="GO:0031424">
    <property type="term" value="P:keratinization"/>
    <property type="evidence" value="ECO:0007669"/>
    <property type="project" value="UniProtKB-KW"/>
</dbReference>
<dbReference type="GO" id="GO:0030216">
    <property type="term" value="P:keratinocyte differentiation"/>
    <property type="evidence" value="ECO:0000266"/>
    <property type="project" value="RGD"/>
</dbReference>
<dbReference type="GO" id="GO:0002786">
    <property type="term" value="P:regulation of antibacterial peptide production"/>
    <property type="evidence" value="ECO:0000266"/>
    <property type="project" value="RGD"/>
</dbReference>
<dbReference type="GO" id="GO:0010224">
    <property type="term" value="P:response to UV-B"/>
    <property type="evidence" value="ECO:0000266"/>
    <property type="project" value="RGD"/>
</dbReference>
<dbReference type="InterPro" id="IPR009733">
    <property type="entry name" value="Involucrin2"/>
</dbReference>
<dbReference type="InterPro" id="IPR019743">
    <property type="entry name" value="Involucrin_CS"/>
</dbReference>
<dbReference type="InterPro" id="IPR019571">
    <property type="entry name" value="Involucrin_N"/>
</dbReference>
<dbReference type="Pfam" id="PF06994">
    <property type="entry name" value="Involucrin2"/>
    <property type="match status" value="9"/>
</dbReference>
<dbReference type="Pfam" id="PF10583">
    <property type="entry name" value="Involucrin_N"/>
    <property type="match status" value="1"/>
</dbReference>
<dbReference type="PROSITE" id="PS00795">
    <property type="entry name" value="INVOLUCRIN"/>
    <property type="match status" value="1"/>
</dbReference>